<proteinExistence type="inferred from homology"/>
<organism>
    <name type="scientific">Ajellomyces capsulatus (strain G186AR / H82 / ATCC MYA-2454 / RMSCC 2432)</name>
    <name type="common">Darling's disease fungus</name>
    <name type="synonym">Histoplasma capsulatum</name>
    <dbReference type="NCBI Taxonomy" id="447093"/>
    <lineage>
        <taxon>Eukaryota</taxon>
        <taxon>Fungi</taxon>
        <taxon>Dikarya</taxon>
        <taxon>Ascomycota</taxon>
        <taxon>Pezizomycotina</taxon>
        <taxon>Eurotiomycetes</taxon>
        <taxon>Eurotiomycetidae</taxon>
        <taxon>Onygenales</taxon>
        <taxon>Ajellomycetaceae</taxon>
        <taxon>Histoplasma</taxon>
    </lineage>
</organism>
<evidence type="ECO:0000255" key="1">
    <source>
        <dbReference type="HAMAP-Rule" id="MF_03152"/>
    </source>
</evidence>
<evidence type="ECO:0000256" key="2">
    <source>
        <dbReference type="SAM" id="MobiDB-lite"/>
    </source>
</evidence>
<evidence type="ECO:0000305" key="3"/>
<gene>
    <name evidence="1" type="primary">TRM5</name>
    <name type="ORF">HCBG_06656</name>
</gene>
<keyword id="KW-0963">Cytoplasm</keyword>
<keyword id="KW-0489">Methyltransferase</keyword>
<keyword id="KW-0496">Mitochondrion</keyword>
<keyword id="KW-0539">Nucleus</keyword>
<keyword id="KW-1185">Reference proteome</keyword>
<keyword id="KW-0949">S-adenosyl-L-methionine</keyword>
<keyword id="KW-0808">Transferase</keyword>
<keyword id="KW-0819">tRNA processing</keyword>
<feature type="chain" id="PRO_0000414158" description="tRNA (guanine(37)-N(1))-methyltransferase">
    <location>
        <begin position="1"/>
        <end position="483"/>
    </location>
</feature>
<feature type="region of interest" description="Disordered" evidence="2">
    <location>
        <begin position="1"/>
        <end position="24"/>
    </location>
</feature>
<feature type="compositionally biased region" description="Low complexity" evidence="2">
    <location>
        <begin position="9"/>
        <end position="24"/>
    </location>
</feature>
<feature type="binding site" evidence="1">
    <location>
        <position position="252"/>
    </location>
    <ligand>
        <name>S-adenosyl-L-methionine</name>
        <dbReference type="ChEBI" id="CHEBI:59789"/>
    </ligand>
</feature>
<feature type="binding site" evidence="1">
    <location>
        <begin position="290"/>
        <end position="291"/>
    </location>
    <ligand>
        <name>S-adenosyl-L-methionine</name>
        <dbReference type="ChEBI" id="CHEBI:59789"/>
    </ligand>
</feature>
<feature type="binding site" evidence="1">
    <location>
        <position position="379"/>
    </location>
    <ligand>
        <name>S-adenosyl-L-methionine</name>
        <dbReference type="ChEBI" id="CHEBI:59789"/>
    </ligand>
</feature>
<name>TRM5_AJECG</name>
<comment type="function">
    <text evidence="1">Specifically methylates the N1 position of guanosine-37 in various cytoplasmic and mitochondrial tRNAs. Methylation is not dependent on the nature of the nucleoside 5' of the target nucleoside. This is the first step in the biosynthesis of wybutosine (yW), a modified base adjacent to the anticodon of tRNAs and required for accurate decoding.</text>
</comment>
<comment type="catalytic activity">
    <reaction evidence="1">
        <text>guanosine(37) in tRNA + S-adenosyl-L-methionine = N(1)-methylguanosine(37) in tRNA + S-adenosyl-L-homocysteine + H(+)</text>
        <dbReference type="Rhea" id="RHEA:36899"/>
        <dbReference type="Rhea" id="RHEA-COMP:10145"/>
        <dbReference type="Rhea" id="RHEA-COMP:10147"/>
        <dbReference type="ChEBI" id="CHEBI:15378"/>
        <dbReference type="ChEBI" id="CHEBI:57856"/>
        <dbReference type="ChEBI" id="CHEBI:59789"/>
        <dbReference type="ChEBI" id="CHEBI:73542"/>
        <dbReference type="ChEBI" id="CHEBI:74269"/>
        <dbReference type="EC" id="2.1.1.228"/>
    </reaction>
</comment>
<comment type="subunit">
    <text evidence="1">Monomer.</text>
</comment>
<comment type="subcellular location">
    <subcellularLocation>
        <location evidence="1">Mitochondrion matrix</location>
    </subcellularLocation>
    <subcellularLocation>
        <location evidence="1">Nucleus</location>
    </subcellularLocation>
    <subcellularLocation>
        <location evidence="1">Cytoplasm</location>
    </subcellularLocation>
    <text evidence="1">Predominantly in the mitochondria and in the nucleus.</text>
</comment>
<comment type="similarity">
    <text evidence="3">Belongs to the class I-like SAM-binding methyltransferase superfamily. TRM5/TYW2 family.</text>
</comment>
<sequence>MEEAATLQSLSISSSSPFPNNSSPVVTAANTISTSESDMFRAPVNRMMRTLDRSFFKKTVPLSAATIFDKQSIGSIKSELLQSQDLLLANRIIPVRAAREGPLENVTDHWYGRKDGKQDGRKCLLLREGIKADDVTTWSPTIQKLVEAKSVEVRPFNLLLDYDYFTYTHFNLREQYLPYKYLLGEILRDKHPQARTVINKTDDVGSHSEFRTFSYEVLAGEDDMLVTVHEQDCEYSFDYSKVYWNTRLATEHERMVSRFKKGEAVCDVMAGVGPFSIPAGKKQVFVWANDLNPYGYECLERGAAKNKVREFVKAHNMNGRDFIRFATERLYQGNPRTVVHRTKVPKAERENSPIRQRKPKAFDTEYLTCPRTFDHFVMNLPATAIEFLDAFRGLYAGMQELFEPYTDRKLPLIHVYCFSTNSEDEALERKDICERISERLGFKITPEDEGRELEIRSVRLVSPTKKMFCASFRLPAEVAFKKA</sequence>
<protein>
    <recommendedName>
        <fullName evidence="1">tRNA (guanine(37)-N(1))-methyltransferase</fullName>
        <ecNumber evidence="1">2.1.1.228</ecNumber>
    </recommendedName>
    <alternativeName>
        <fullName evidence="1">M1G-methyltransferase</fullName>
    </alternativeName>
    <alternativeName>
        <fullName evidence="1">tRNA [GM37] methyltransferase</fullName>
    </alternativeName>
    <alternativeName>
        <fullName evidence="1">tRNA methyltransferase 5</fullName>
    </alternativeName>
</protein>
<dbReference type="EC" id="2.1.1.228" evidence="1"/>
<dbReference type="EMBL" id="GG663372">
    <property type="protein sequence ID" value="EEH04705.1"/>
    <property type="molecule type" value="Genomic_DNA"/>
</dbReference>
<dbReference type="SMR" id="C0NUP2"/>
<dbReference type="FunCoup" id="C0NUP2">
    <property type="interactions" value="1044"/>
</dbReference>
<dbReference type="STRING" id="447093.C0NUP2"/>
<dbReference type="VEuPathDB" id="FungiDB:I7I50_12577"/>
<dbReference type="HOGENOM" id="CLU_022610_2_2_1"/>
<dbReference type="InParanoid" id="C0NUP2"/>
<dbReference type="Proteomes" id="UP000001631">
    <property type="component" value="Unassembled WGS sequence"/>
</dbReference>
<dbReference type="GO" id="GO:0005759">
    <property type="term" value="C:mitochondrial matrix"/>
    <property type="evidence" value="ECO:0007669"/>
    <property type="project" value="UniProtKB-SubCell"/>
</dbReference>
<dbReference type="GO" id="GO:0005634">
    <property type="term" value="C:nucleus"/>
    <property type="evidence" value="ECO:0007669"/>
    <property type="project" value="UniProtKB-SubCell"/>
</dbReference>
<dbReference type="GO" id="GO:0052906">
    <property type="term" value="F:tRNA (guanine(37)-N1)-methyltransferase activity"/>
    <property type="evidence" value="ECO:0007669"/>
    <property type="project" value="UniProtKB-UniRule"/>
</dbReference>
<dbReference type="GO" id="GO:0070901">
    <property type="term" value="P:mitochondrial tRNA methylation"/>
    <property type="evidence" value="ECO:0007669"/>
    <property type="project" value="TreeGrafter"/>
</dbReference>
<dbReference type="GO" id="GO:0002939">
    <property type="term" value="P:tRNA N1-guanine methylation"/>
    <property type="evidence" value="ECO:0007669"/>
    <property type="project" value="TreeGrafter"/>
</dbReference>
<dbReference type="FunFam" id="3.30.300.110:FF:000001">
    <property type="entry name" value="tRNA (guanine(37)-N1)-methyltransferase"/>
    <property type="match status" value="1"/>
</dbReference>
<dbReference type="Gene3D" id="3.30.300.110">
    <property type="entry name" value="Met-10+ protein-like domains"/>
    <property type="match status" value="1"/>
</dbReference>
<dbReference type="Gene3D" id="3.40.50.150">
    <property type="entry name" value="Vaccinia Virus protein VP39"/>
    <property type="match status" value="1"/>
</dbReference>
<dbReference type="HAMAP" id="MF_03152">
    <property type="entry name" value="TRM5"/>
    <property type="match status" value="1"/>
</dbReference>
<dbReference type="InterPro" id="IPR030382">
    <property type="entry name" value="MeTrfase_TRM5/TYW2"/>
</dbReference>
<dbReference type="InterPro" id="IPR029063">
    <property type="entry name" value="SAM-dependent_MTases_sf"/>
</dbReference>
<dbReference type="InterPro" id="IPR056743">
    <property type="entry name" value="TRM5-TYW2-like_MTfase"/>
</dbReference>
<dbReference type="InterPro" id="IPR056744">
    <property type="entry name" value="TRM5/TYW2-like_N"/>
</dbReference>
<dbReference type="InterPro" id="IPR025792">
    <property type="entry name" value="tRNA_Gua_MeTrfase_euk"/>
</dbReference>
<dbReference type="PANTHER" id="PTHR23245:SF36">
    <property type="entry name" value="TRNA (GUANINE(37)-N1)-METHYLTRANSFERASE"/>
    <property type="match status" value="1"/>
</dbReference>
<dbReference type="PANTHER" id="PTHR23245">
    <property type="entry name" value="TRNA METHYLTRANSFERASE"/>
    <property type="match status" value="1"/>
</dbReference>
<dbReference type="Pfam" id="PF02475">
    <property type="entry name" value="TRM5-TYW2_MTfase"/>
    <property type="match status" value="1"/>
</dbReference>
<dbReference type="Pfam" id="PF25133">
    <property type="entry name" value="TYW2_N_2"/>
    <property type="match status" value="1"/>
</dbReference>
<dbReference type="SUPFAM" id="SSF53335">
    <property type="entry name" value="S-adenosyl-L-methionine-dependent methyltransferases"/>
    <property type="match status" value="1"/>
</dbReference>
<dbReference type="PROSITE" id="PS51684">
    <property type="entry name" value="SAM_MT_TRM5_TYW2"/>
    <property type="match status" value="1"/>
</dbReference>
<accession>C0NUP2</accession>
<reference key="1">
    <citation type="submission" date="2009-02" db="EMBL/GenBank/DDBJ databases">
        <title>The genome sequence of Ajellomyces capsulatus strain G186AR.</title>
        <authorList>
            <person name="Champion M."/>
            <person name="Cuomo C.A."/>
            <person name="Ma L.-J."/>
            <person name="Henn M.R."/>
            <person name="Sil A."/>
            <person name="Goldman B."/>
            <person name="Young S.K."/>
            <person name="Kodira C.D."/>
            <person name="Zeng Q."/>
            <person name="Koehrsen M."/>
            <person name="Alvarado L."/>
            <person name="Berlin A."/>
            <person name="Borenstein D."/>
            <person name="Chen Z."/>
            <person name="Engels R."/>
            <person name="Freedman E."/>
            <person name="Gellesch M."/>
            <person name="Goldberg J."/>
            <person name="Griggs A."/>
            <person name="Gujja S."/>
            <person name="Heiman D."/>
            <person name="Hepburn T."/>
            <person name="Howarth C."/>
            <person name="Jen D."/>
            <person name="Larson L."/>
            <person name="Lewis B."/>
            <person name="Mehta T."/>
            <person name="Park D."/>
            <person name="Pearson M."/>
            <person name="Roberts A."/>
            <person name="Saif S."/>
            <person name="Shea T."/>
            <person name="Shenoy N."/>
            <person name="Sisk P."/>
            <person name="Stolte C."/>
            <person name="Sykes S."/>
            <person name="Walk T."/>
            <person name="White J."/>
            <person name="Yandava C."/>
            <person name="Klein B."/>
            <person name="McEwen J.G."/>
            <person name="Puccia R."/>
            <person name="Goldman G.H."/>
            <person name="Felipe M.S."/>
            <person name="Nino-Vega G."/>
            <person name="San-Blas G."/>
            <person name="Taylor J."/>
            <person name="Mendoza L."/>
            <person name="Galagan J.E."/>
            <person name="Nusbaum C."/>
            <person name="Birren B.W."/>
        </authorList>
    </citation>
    <scope>NUCLEOTIDE SEQUENCE [LARGE SCALE GENOMIC DNA]</scope>
    <source>
        <strain>G186AR / H82 / ATCC MYA-2454 / RMSCC 2432</strain>
    </source>
</reference>